<dbReference type="EMBL" id="AE005674">
    <property type="protein sequence ID" value="AAN45000.2"/>
    <property type="molecule type" value="Genomic_DNA"/>
</dbReference>
<dbReference type="EMBL" id="AE014073">
    <property type="protein sequence ID" value="AAP19186.1"/>
    <property type="molecule type" value="Genomic_DNA"/>
</dbReference>
<dbReference type="RefSeq" id="NP_709293.2">
    <property type="nucleotide sequence ID" value="NC_004337.2"/>
</dbReference>
<dbReference type="RefSeq" id="WP_000965672.1">
    <property type="nucleotide sequence ID" value="NZ_WPGW01000225.1"/>
</dbReference>
<dbReference type="SMR" id="P0AET7"/>
<dbReference type="STRING" id="198214.SF3545"/>
<dbReference type="PaxDb" id="198214-SF3545"/>
<dbReference type="GeneID" id="1026394"/>
<dbReference type="GeneID" id="93778474"/>
<dbReference type="KEGG" id="sfl:SF3545"/>
<dbReference type="KEGG" id="sfx:S4222"/>
<dbReference type="PATRIC" id="fig|198214.7.peg.4175"/>
<dbReference type="HOGENOM" id="CLU_091585_6_0_6"/>
<dbReference type="Proteomes" id="UP000001006">
    <property type="component" value="Chromosome"/>
</dbReference>
<dbReference type="Proteomes" id="UP000002673">
    <property type="component" value="Chromosome"/>
</dbReference>
<dbReference type="GO" id="GO:0005886">
    <property type="term" value="C:plasma membrane"/>
    <property type="evidence" value="ECO:0007669"/>
    <property type="project" value="UniProtKB-SubCell"/>
</dbReference>
<dbReference type="InterPro" id="IPR052712">
    <property type="entry name" value="Acid_resist_chaperone_HdeD"/>
</dbReference>
<dbReference type="InterPro" id="IPR005325">
    <property type="entry name" value="DUF308_memb"/>
</dbReference>
<dbReference type="NCBIfam" id="NF007577">
    <property type="entry name" value="PRK10209.1"/>
    <property type="match status" value="1"/>
</dbReference>
<dbReference type="PANTHER" id="PTHR34989">
    <property type="entry name" value="PROTEIN HDED"/>
    <property type="match status" value="1"/>
</dbReference>
<dbReference type="PANTHER" id="PTHR34989:SF1">
    <property type="entry name" value="PROTEIN HDED"/>
    <property type="match status" value="1"/>
</dbReference>
<dbReference type="Pfam" id="PF03729">
    <property type="entry name" value="DUF308"/>
    <property type="match status" value="2"/>
</dbReference>
<evidence type="ECO:0000250" key="1"/>
<evidence type="ECO:0000255" key="2"/>
<gene>
    <name type="primary">hdeD</name>
    <name type="ordered locus">SF3545</name>
    <name type="ordered locus">S4222</name>
</gene>
<keyword id="KW-0997">Cell inner membrane</keyword>
<keyword id="KW-1003">Cell membrane</keyword>
<keyword id="KW-0472">Membrane</keyword>
<keyword id="KW-1185">Reference proteome</keyword>
<keyword id="KW-0812">Transmembrane</keyword>
<keyword id="KW-1133">Transmembrane helix</keyword>
<organism>
    <name type="scientific">Shigella flexneri</name>
    <dbReference type="NCBI Taxonomy" id="623"/>
    <lineage>
        <taxon>Bacteria</taxon>
        <taxon>Pseudomonadati</taxon>
        <taxon>Pseudomonadota</taxon>
        <taxon>Gammaproteobacteria</taxon>
        <taxon>Enterobacterales</taxon>
        <taxon>Enterobacteriaceae</taxon>
        <taxon>Shigella</taxon>
    </lineage>
</organism>
<accession>P0AET7</accession>
<accession>P26603</accession>
<accession>P28326</accession>
<feature type="chain" id="PRO_0000083937" description="Protein HdeD">
    <location>
        <begin position="1"/>
        <end position="190"/>
    </location>
</feature>
<feature type="topological domain" description="Cytoplasmic" evidence="2">
    <location>
        <begin position="1"/>
        <end position="25"/>
    </location>
</feature>
<feature type="transmembrane region" description="Helical" evidence="2">
    <location>
        <begin position="26"/>
        <end position="44"/>
    </location>
</feature>
<feature type="topological domain" description="Periplasmic" evidence="2">
    <location>
        <begin position="45"/>
        <end position="47"/>
    </location>
</feature>
<feature type="transmembrane region" description="Helical" evidence="2">
    <location>
        <begin position="48"/>
        <end position="70"/>
    </location>
</feature>
<feature type="topological domain" description="Cytoplasmic" evidence="2">
    <location>
        <begin position="71"/>
        <end position="76"/>
    </location>
</feature>
<feature type="transmembrane region" description="Helical" evidence="2">
    <location>
        <begin position="77"/>
        <end position="99"/>
    </location>
</feature>
<feature type="topological domain" description="Periplasmic" evidence="2">
    <location>
        <begin position="100"/>
        <end position="103"/>
    </location>
</feature>
<feature type="transmembrane region" description="Helical" evidence="2">
    <location>
        <begin position="104"/>
        <end position="126"/>
    </location>
</feature>
<feature type="topological domain" description="Cytoplasmic" evidence="2">
    <location>
        <begin position="127"/>
        <end position="138"/>
    </location>
</feature>
<feature type="transmembrane region" description="Helical" evidence="2">
    <location>
        <begin position="139"/>
        <end position="161"/>
    </location>
</feature>
<feature type="topological domain" description="Periplasmic" evidence="2">
    <location>
        <begin position="162"/>
        <end position="164"/>
    </location>
</feature>
<feature type="transmembrane region" description="Helical" evidence="2">
    <location>
        <begin position="165"/>
        <end position="187"/>
    </location>
</feature>
<feature type="topological domain" description="Cytoplasmic" evidence="2">
    <location>
        <begin position="188"/>
        <end position="190"/>
    </location>
</feature>
<name>HDED_SHIFL</name>
<sequence length="190" mass="20903">MLYIDKATILKFDLEMLKKHRRAIQFIAVLLFIVGLLCISFPFVSGDILSTVVGALLICSGIALIVGLFSNRSHNFWPVLSGFLVAVAYLLIGYFFIRAPELGIFAIAAFIAGLFCVAGVIRLMSWYRQRSMKGSWLQLVIGVLDIVIAWIFLGATPMVSVTLVSTLVGIELIFSAASLFSFASLFVKQQ</sequence>
<proteinExistence type="inferred from homology"/>
<protein>
    <recommendedName>
        <fullName>Protein HdeD</fullName>
    </recommendedName>
</protein>
<reference key="1">
    <citation type="journal article" date="2002" name="Nucleic Acids Res.">
        <title>Genome sequence of Shigella flexneri 2a: insights into pathogenicity through comparison with genomes of Escherichia coli K12 and O157.</title>
        <authorList>
            <person name="Jin Q."/>
            <person name="Yuan Z."/>
            <person name="Xu J."/>
            <person name="Wang Y."/>
            <person name="Shen Y."/>
            <person name="Lu W."/>
            <person name="Wang J."/>
            <person name="Liu H."/>
            <person name="Yang J."/>
            <person name="Yang F."/>
            <person name="Zhang X."/>
            <person name="Zhang J."/>
            <person name="Yang G."/>
            <person name="Wu H."/>
            <person name="Qu D."/>
            <person name="Dong J."/>
            <person name="Sun L."/>
            <person name="Xue Y."/>
            <person name="Zhao A."/>
            <person name="Gao Y."/>
            <person name="Zhu J."/>
            <person name="Kan B."/>
            <person name="Ding K."/>
            <person name="Chen S."/>
            <person name="Cheng H."/>
            <person name="Yao Z."/>
            <person name="He B."/>
            <person name="Chen R."/>
            <person name="Ma D."/>
            <person name="Qiang B."/>
            <person name="Wen Y."/>
            <person name="Hou Y."/>
            <person name="Yu J."/>
        </authorList>
    </citation>
    <scope>NUCLEOTIDE SEQUENCE [LARGE SCALE GENOMIC DNA]</scope>
    <source>
        <strain>301 / Serotype 2a</strain>
    </source>
</reference>
<reference key="2">
    <citation type="journal article" date="2003" name="Infect. Immun.">
        <title>Complete genome sequence and comparative genomics of Shigella flexneri serotype 2a strain 2457T.</title>
        <authorList>
            <person name="Wei J."/>
            <person name="Goldberg M.B."/>
            <person name="Burland V."/>
            <person name="Venkatesan M.M."/>
            <person name="Deng W."/>
            <person name="Fournier G."/>
            <person name="Mayhew G.F."/>
            <person name="Plunkett G. III"/>
            <person name="Rose D.J."/>
            <person name="Darling A."/>
            <person name="Mau B."/>
            <person name="Perna N.T."/>
            <person name="Payne S.M."/>
            <person name="Runyen-Janecky L.J."/>
            <person name="Zhou S."/>
            <person name="Schwartz D.C."/>
            <person name="Blattner F.R."/>
        </authorList>
    </citation>
    <scope>NUCLEOTIDE SEQUENCE [LARGE SCALE GENOMIC DNA]</scope>
    <source>
        <strain>ATCC 700930 / 2457T / Serotype 2a</strain>
    </source>
</reference>
<comment type="subcellular location">
    <subcellularLocation>
        <location evidence="1">Cell inner membrane</location>
        <topology evidence="1">Multi-pass membrane protein</topology>
    </subcellularLocation>
</comment>